<feature type="chain" id="PRO_0000449040" description="Toxin Tse2">
    <location>
        <begin position="1"/>
        <end position="158"/>
    </location>
</feature>
<feature type="mutagenesis site" description="Complete loss of toxicity." evidence="3">
    <original>R</original>
    <variation>A</variation>
    <location>
        <position position="14"/>
    </location>
</feature>
<feature type="mutagenesis site" description="Complete loss of toxicity." evidence="3">
    <original>S</original>
    <variation>A</variation>
    <location>
        <position position="80"/>
    </location>
</feature>
<feature type="mutagenesis site" description="Complete loss of toxicity." evidence="3">
    <original>H</original>
    <variation>A</variation>
    <location>
        <position position="122"/>
    </location>
</feature>
<feature type="strand" evidence="6">
    <location>
        <begin position="12"/>
        <end position="16"/>
    </location>
</feature>
<feature type="helix" evidence="6">
    <location>
        <begin position="18"/>
        <end position="20"/>
    </location>
</feature>
<feature type="strand" evidence="6">
    <location>
        <begin position="21"/>
        <end position="23"/>
    </location>
</feature>
<feature type="helix" evidence="6">
    <location>
        <begin position="26"/>
        <end position="28"/>
    </location>
</feature>
<feature type="strand" evidence="6">
    <location>
        <begin position="79"/>
        <end position="85"/>
    </location>
</feature>
<feature type="strand" evidence="6">
    <location>
        <begin position="91"/>
        <end position="97"/>
    </location>
</feature>
<feature type="strand" evidence="6">
    <location>
        <begin position="107"/>
        <end position="115"/>
    </location>
</feature>
<feature type="turn" evidence="6">
    <location>
        <begin position="116"/>
        <end position="119"/>
    </location>
</feature>
<feature type="strand" evidence="6">
    <location>
        <begin position="120"/>
        <end position="129"/>
    </location>
</feature>
<feature type="helix" evidence="6">
    <location>
        <begin position="133"/>
        <end position="155"/>
    </location>
</feature>
<name>TSE2_PSEAE</name>
<accession>Q9I0E0</accession>
<gene>
    <name evidence="4" type="primary">tse2</name>
    <name type="ordered locus">PA2702</name>
</gene>
<protein>
    <recommendedName>
        <fullName evidence="4">Toxin Tse2</fullName>
    </recommendedName>
</protein>
<keyword id="KW-0002">3D-structure</keyword>
<keyword id="KW-1185">Reference proteome</keyword>
<keyword id="KW-0964">Secreted</keyword>
<dbReference type="EMBL" id="AE004091">
    <property type="protein sequence ID" value="AAG06090.1"/>
    <property type="molecule type" value="Genomic_DNA"/>
</dbReference>
<dbReference type="PIR" id="B83308">
    <property type="entry name" value="B83308"/>
</dbReference>
<dbReference type="RefSeq" id="NP_251392.1">
    <property type="nucleotide sequence ID" value="NC_002516.2"/>
</dbReference>
<dbReference type="RefSeq" id="WP_003101516.1">
    <property type="nucleotide sequence ID" value="NZ_QZGE01000011.1"/>
</dbReference>
<dbReference type="PDB" id="5AKO">
    <property type="method" value="X-ray"/>
    <property type="resolution" value="2.40 A"/>
    <property type="chains" value="C/D=1-158"/>
</dbReference>
<dbReference type="PDBsum" id="5AKO"/>
<dbReference type="SMR" id="Q9I0E0"/>
<dbReference type="DIP" id="DIP-61911N"/>
<dbReference type="IntAct" id="Q9I0E0">
    <property type="interactions" value="1"/>
</dbReference>
<dbReference type="STRING" id="208964.PA2702"/>
<dbReference type="PaxDb" id="208964-PA2702"/>
<dbReference type="DNASU" id="880323"/>
<dbReference type="GeneID" id="880323"/>
<dbReference type="KEGG" id="pae:PA2702"/>
<dbReference type="PATRIC" id="fig|208964.12.peg.2828"/>
<dbReference type="PseudoCAP" id="PA2702"/>
<dbReference type="HOGENOM" id="CLU_1720761_0_0_6"/>
<dbReference type="InParanoid" id="Q9I0E0"/>
<dbReference type="OrthoDB" id="461120at2"/>
<dbReference type="BioCyc" id="PAER208964:G1FZ6-2742-MONOMER"/>
<dbReference type="EvolutionaryTrace" id="Q9I0E0"/>
<dbReference type="Proteomes" id="UP000002438">
    <property type="component" value="Chromosome"/>
</dbReference>
<dbReference type="GO" id="GO:0005576">
    <property type="term" value="C:extracellular region"/>
    <property type="evidence" value="ECO:0007669"/>
    <property type="project" value="UniProtKB-SubCell"/>
</dbReference>
<dbReference type="InterPro" id="IPR041018">
    <property type="entry name" value="ADPRTs_Tse2"/>
</dbReference>
<dbReference type="Pfam" id="PF18648">
    <property type="entry name" value="ADPRTs_Tse2"/>
    <property type="match status" value="1"/>
</dbReference>
<organism>
    <name type="scientific">Pseudomonas aeruginosa (strain ATCC 15692 / DSM 22644 / CIP 104116 / JCM 14847 / LMG 12228 / 1C / PRS 101 / PAO1)</name>
    <dbReference type="NCBI Taxonomy" id="208964"/>
    <lineage>
        <taxon>Bacteria</taxon>
        <taxon>Pseudomonadati</taxon>
        <taxon>Pseudomonadota</taxon>
        <taxon>Gammaproteobacteria</taxon>
        <taxon>Pseudomonadales</taxon>
        <taxon>Pseudomonadaceae</taxon>
        <taxon>Pseudomonas</taxon>
    </lineage>
</organism>
<reference key="1">
    <citation type="journal article" date="2000" name="Nature">
        <title>Complete genome sequence of Pseudomonas aeruginosa PAO1, an opportunistic pathogen.</title>
        <authorList>
            <person name="Stover C.K."/>
            <person name="Pham X.-Q.T."/>
            <person name="Erwin A.L."/>
            <person name="Mizoguchi S.D."/>
            <person name="Warrener P."/>
            <person name="Hickey M.J."/>
            <person name="Brinkman F.S.L."/>
            <person name="Hufnagle W.O."/>
            <person name="Kowalik D.J."/>
            <person name="Lagrou M."/>
            <person name="Garber R.L."/>
            <person name="Goltry L."/>
            <person name="Tolentino E."/>
            <person name="Westbrock-Wadman S."/>
            <person name="Yuan Y."/>
            <person name="Brody L.L."/>
            <person name="Coulter S.N."/>
            <person name="Folger K.R."/>
            <person name="Kas A."/>
            <person name="Larbig K."/>
            <person name="Lim R.M."/>
            <person name="Smith K.A."/>
            <person name="Spencer D.H."/>
            <person name="Wong G.K.-S."/>
            <person name="Wu Z."/>
            <person name="Paulsen I.T."/>
            <person name="Reizer J."/>
            <person name="Saier M.H. Jr."/>
            <person name="Hancock R.E.W."/>
            <person name="Lory S."/>
            <person name="Olson M.V."/>
        </authorList>
    </citation>
    <scope>NUCLEOTIDE SEQUENCE [LARGE SCALE GENOMIC DNA]</scope>
    <source>
        <strain>ATCC 15692 / DSM 22644 / CIP 104116 / JCM 14847 / LMG 12228 / 1C / PRS 101 / PAO1</strain>
    </source>
</reference>
<reference key="2">
    <citation type="journal article" date="2010" name="Cell Host Microbe">
        <title>A type VI secretion system of Pseudomonas aeruginosa targets a toxin to bacteria.</title>
        <authorList>
            <person name="Hood R.D."/>
            <person name="Singh P."/>
            <person name="Hsu F."/>
            <person name="Guevener T."/>
            <person name="Carl M.A."/>
            <person name="Trinidad R.R."/>
            <person name="Silverman J.M."/>
            <person name="Ohlson B.B."/>
            <person name="Hicks K.G."/>
            <person name="Plemel R.L."/>
            <person name="Li M."/>
            <person name="Schwarz S."/>
            <person name="Wang W.Y."/>
            <person name="Merz A.J."/>
            <person name="Goodlett D.R."/>
            <person name="Mougous J.D."/>
        </authorList>
    </citation>
    <scope>FUNCTION</scope>
    <scope>SUBCELLULAR LOCATION</scope>
    <scope>INTERACTION WITH TSI2</scope>
</reference>
<reference key="3">
    <citation type="journal article" date="2012" name="PLoS Pathog.">
        <title>Structural basis for type VI secretion effector recognition by a cognate immunity protein.</title>
        <authorList>
            <person name="Li M."/>
            <person name="Le Trong I."/>
            <person name="Carl M.A."/>
            <person name="Larson E.T."/>
            <person name="Chou S."/>
            <person name="De Leon J.A."/>
            <person name="Dove S.L."/>
            <person name="Stenkamp R.E."/>
            <person name="Mougous J.D."/>
        </authorList>
    </citation>
    <scope>FUNCTION</scope>
    <scope>INTERACTION WITH TSI2</scope>
    <scope>SUBUNIT</scope>
</reference>
<reference evidence="5" key="4">
    <citation type="journal article" date="2016" name="Structure">
        <title>The Structure of the Toxin and Type Six Secretion System Substrate Tse2 in Complex with Its Immunity Protein.</title>
        <authorList>
            <person name="Robb C.S."/>
            <person name="Robb M."/>
            <person name="Nano F.E."/>
            <person name="Boraston A.B."/>
        </authorList>
    </citation>
    <scope>X-RAY CRYSTALLOGRAPHY (2.40 ANGSTROMS)</scope>
    <scope>SUBUNIT</scope>
    <scope>INTERACTION WITH TSI2</scope>
    <scope>MUTAGENESIS OF ARG-14; SER-80 AND HIS-122</scope>
    <scope>FUNCTION</scope>
</reference>
<sequence length="158" mass="17657">MSYDYEKTSLTLYRAVFKANYDGDVGRYLHPDKELAEAAEVAPLLHPTFDSPNTPGVPARAPDIVAGRDGLYAPDTGGTSVFDRAGVLRRADGDFVIPDGTDIPPDLKVKQDSYNKRLQATHYTIMPAKPMYREVLMGQLDNFVRNAIRRQWEKARGL</sequence>
<proteinExistence type="evidence at protein level"/>
<evidence type="ECO:0000269" key="1">
    <source>
    </source>
</evidence>
<evidence type="ECO:0000269" key="2">
    <source>
    </source>
</evidence>
<evidence type="ECO:0000269" key="3">
    <source>
    </source>
</evidence>
<evidence type="ECO:0000303" key="4">
    <source>
    </source>
</evidence>
<evidence type="ECO:0007744" key="5">
    <source>
        <dbReference type="PDB" id="5AKO"/>
    </source>
</evidence>
<evidence type="ECO:0007829" key="6">
    <source>
        <dbReference type="PDB" id="5AKO"/>
    </source>
</evidence>
<comment type="function">
    <text evidence="1 3">Toxin secreted by the H1 type VI (H1-T6SS) secretion system into the cytoplasm of recipient cells (PubMed:20114026). Acts likely as a NAD-dependent cytotoxin towards both prokaryotic and eukaryotic cells (PubMed:26749446).</text>
</comment>
<comment type="subunit">
    <text evidence="1 2 3">Forms a heterotetramer with Tsi2 consisting of two Tse2 dimers and two Tsi2 dimers. Formation of the complex inactivates Tse2 enzymatic activity.</text>
</comment>
<comment type="subcellular location">
    <subcellularLocation>
        <location evidence="1">Secreted</location>
    </subcellularLocation>
    <text evidence="1">Delivered to the target cell cytoplasm by the H1 type VI (H1-T6SS) secretion system.</text>
</comment>